<gene>
    <name type="ordered locus">PTH_0588</name>
</gene>
<protein>
    <recommendedName>
        <fullName evidence="1">UPF0251 protein PTH_0588</fullName>
    </recommendedName>
</protein>
<evidence type="ECO:0000255" key="1">
    <source>
        <dbReference type="HAMAP-Rule" id="MF_00674"/>
    </source>
</evidence>
<keyword id="KW-1185">Reference proteome</keyword>
<reference key="1">
    <citation type="journal article" date="2008" name="Genome Res.">
        <title>The genome of Pelotomaculum thermopropionicum reveals niche-associated evolution in anaerobic microbiota.</title>
        <authorList>
            <person name="Kosaka T."/>
            <person name="Kato S."/>
            <person name="Shimoyama T."/>
            <person name="Ishii S."/>
            <person name="Abe T."/>
            <person name="Watanabe K."/>
        </authorList>
    </citation>
    <scope>NUCLEOTIDE SEQUENCE [LARGE SCALE GENOMIC DNA]</scope>
    <source>
        <strain>DSM 13744 / JCM 10971 / SI</strain>
    </source>
</reference>
<accession>A5D4R0</accession>
<organism>
    <name type="scientific">Pelotomaculum thermopropionicum (strain DSM 13744 / JCM 10971 / SI)</name>
    <dbReference type="NCBI Taxonomy" id="370438"/>
    <lineage>
        <taxon>Bacteria</taxon>
        <taxon>Bacillati</taxon>
        <taxon>Bacillota</taxon>
        <taxon>Clostridia</taxon>
        <taxon>Eubacteriales</taxon>
        <taxon>Desulfotomaculaceae</taxon>
        <taxon>Pelotomaculum</taxon>
    </lineage>
</organism>
<feature type="chain" id="PRO_1000082954" description="UPF0251 protein PTH_0588">
    <location>
        <begin position="1"/>
        <end position="132"/>
    </location>
</feature>
<dbReference type="EMBL" id="AP009389">
    <property type="protein sequence ID" value="BAF58769.1"/>
    <property type="molecule type" value="Genomic_DNA"/>
</dbReference>
<dbReference type="STRING" id="370438.PTH_0588"/>
<dbReference type="KEGG" id="pth:PTH_0588"/>
<dbReference type="eggNOG" id="COG1342">
    <property type="taxonomic scope" value="Bacteria"/>
</dbReference>
<dbReference type="HOGENOM" id="CLU_094511_0_1_9"/>
<dbReference type="Proteomes" id="UP000006556">
    <property type="component" value="Chromosome"/>
</dbReference>
<dbReference type="Gene3D" id="1.10.10.10">
    <property type="entry name" value="Winged helix-like DNA-binding domain superfamily/Winged helix DNA-binding domain"/>
    <property type="match status" value="1"/>
</dbReference>
<dbReference type="HAMAP" id="MF_00674">
    <property type="entry name" value="UPF0251"/>
    <property type="match status" value="1"/>
</dbReference>
<dbReference type="InterPro" id="IPR013324">
    <property type="entry name" value="RNA_pol_sigma_r3/r4-like"/>
</dbReference>
<dbReference type="InterPro" id="IPR002852">
    <property type="entry name" value="UPF0251"/>
</dbReference>
<dbReference type="InterPro" id="IPR036388">
    <property type="entry name" value="WH-like_DNA-bd_sf"/>
</dbReference>
<dbReference type="PANTHER" id="PTHR37478">
    <property type="match status" value="1"/>
</dbReference>
<dbReference type="PANTHER" id="PTHR37478:SF2">
    <property type="entry name" value="UPF0251 PROTEIN TK0562"/>
    <property type="match status" value="1"/>
</dbReference>
<dbReference type="Pfam" id="PF02001">
    <property type="entry name" value="DUF134"/>
    <property type="match status" value="1"/>
</dbReference>
<dbReference type="SUPFAM" id="SSF88659">
    <property type="entry name" value="Sigma3 and sigma4 domains of RNA polymerase sigma factors"/>
    <property type="match status" value="1"/>
</dbReference>
<sequence>MPRPPKCRRVEQFPGFTFFKPSGIPMSELSEVVLSVEELEAIRLRDLEGMEHEECAGKMSVSRPTFHRILASARQKVAHALINGTALRITGGNFKLVQYMLECRRCGHRWKGAICRRMLCPSCSSMDWHRIE</sequence>
<comment type="similarity">
    <text evidence="1">Belongs to the UPF0251 family.</text>
</comment>
<name>Y588_PELTS</name>
<proteinExistence type="inferred from homology"/>